<comment type="caution">
    <text evidence="2">Product of a dubious gene prediction.</text>
</comment>
<keyword id="KW-1185">Reference proteome</keyword>
<protein>
    <recommendedName>
        <fullName>Putative uncharacterized 10.4 kDa protein</fullName>
    </recommendedName>
</protein>
<dbReference type="EMBL" id="V01460">
    <property type="status" value="NOT_ANNOTATED_CDS"/>
    <property type="molecule type" value="Genomic_DNA"/>
</dbReference>
<dbReference type="PIR" id="A03717">
    <property type="entry name" value="A03717"/>
</dbReference>
<dbReference type="Proteomes" id="UP000007930">
    <property type="component" value="Segment"/>
</dbReference>
<evidence type="ECO:0000256" key="1">
    <source>
        <dbReference type="SAM" id="MobiDB-lite"/>
    </source>
</evidence>
<evidence type="ECO:0000305" key="2"/>
<accession>P03163</accession>
<organismHost>
    <name type="scientific">Homo sapiens</name>
    <name type="common">Human</name>
    <dbReference type="NCBI Taxonomy" id="9606"/>
</organismHost>
<organismHost>
    <name type="scientific">Pan troglodytes</name>
    <name type="common">Chimpanzee</name>
    <dbReference type="NCBI Taxonomy" id="9598"/>
</organismHost>
<reference key="1">
    <citation type="journal article" date="1979" name="Nature">
        <title>Nucleotide sequence of the hepatitis B virus genome (subtype ayw) cloned in E. coli.</title>
        <authorList>
            <person name="Galibert F."/>
            <person name="Mandart E."/>
            <person name="Fitoussi F."/>
            <person name="Tiollais P."/>
            <person name="Charnay P."/>
        </authorList>
    </citation>
    <scope>NUCLEOTIDE SEQUENCE [GENOMIC DNA]</scope>
</reference>
<sequence>MRRAEVKRSAHGPADEKAQTGSPRKERCAPWSVGTADGEGDERVPSDPEKGRPQDSAPTGRKQRTSRAGSSWQHSLAAMETMYICGIGQQSYQSR</sequence>
<organism>
    <name type="scientific">Hepatitis B virus genotype D subtype ayw (isolate France/Tiollais/1979)</name>
    <name type="common">HBV-D</name>
    <dbReference type="NCBI Taxonomy" id="490133"/>
    <lineage>
        <taxon>Viruses</taxon>
        <taxon>Riboviria</taxon>
        <taxon>Pararnavirae</taxon>
        <taxon>Artverviricota</taxon>
        <taxon>Revtraviricetes</taxon>
        <taxon>Blubervirales</taxon>
        <taxon>Hepadnaviridae</taxon>
        <taxon>Orthohepadnavirus</taxon>
        <taxon>Hepatitis B virus</taxon>
        <taxon>hepatitis B virus genotype D</taxon>
    </lineage>
</organism>
<name>Y10K_HBVD3</name>
<proteinExistence type="uncertain"/>
<feature type="chain" id="PRO_0000222377" description="Putative uncharacterized 10.4 kDa protein">
    <location>
        <begin position="1"/>
        <end position="95"/>
    </location>
</feature>
<feature type="region of interest" description="Disordered" evidence="1">
    <location>
        <begin position="1"/>
        <end position="73"/>
    </location>
</feature>
<feature type="compositionally biased region" description="Basic and acidic residues" evidence="1">
    <location>
        <begin position="1"/>
        <end position="28"/>
    </location>
</feature>
<feature type="compositionally biased region" description="Basic and acidic residues" evidence="1">
    <location>
        <begin position="41"/>
        <end position="53"/>
    </location>
</feature>